<proteinExistence type="evidence at transcript level"/>
<feature type="chain" id="PRO_0000069929" description="Neuropeptide Y receptor type 2">
    <location>
        <begin position="1"/>
        <end position="381"/>
    </location>
</feature>
<feature type="topological domain" description="Extracellular" evidence="1">
    <location>
        <begin position="1"/>
        <end position="51"/>
    </location>
</feature>
<feature type="transmembrane region" description="Helical; Name=1" evidence="1">
    <location>
        <begin position="52"/>
        <end position="72"/>
    </location>
</feature>
<feature type="topological domain" description="Cytoplasmic" evidence="1">
    <location>
        <begin position="73"/>
        <end position="86"/>
    </location>
</feature>
<feature type="transmembrane region" description="Helical; Name=2" evidence="1">
    <location>
        <begin position="87"/>
        <end position="107"/>
    </location>
</feature>
<feature type="topological domain" description="Extracellular" evidence="1">
    <location>
        <begin position="108"/>
        <end position="124"/>
    </location>
</feature>
<feature type="transmembrane region" description="Helical; Name=3" evidence="1">
    <location>
        <begin position="125"/>
        <end position="145"/>
    </location>
</feature>
<feature type="topological domain" description="Cytoplasmic" evidence="1">
    <location>
        <begin position="146"/>
        <end position="165"/>
    </location>
</feature>
<feature type="transmembrane region" description="Helical; Name=4" evidence="1">
    <location>
        <begin position="166"/>
        <end position="186"/>
    </location>
</feature>
<feature type="topological domain" description="Extracellular" evidence="1">
    <location>
        <begin position="187"/>
        <end position="216"/>
    </location>
</feature>
<feature type="transmembrane region" description="Helical; Name=5" evidence="1">
    <location>
        <begin position="217"/>
        <end position="237"/>
    </location>
</feature>
<feature type="topological domain" description="Cytoplasmic" evidence="1">
    <location>
        <begin position="238"/>
        <end position="268"/>
    </location>
</feature>
<feature type="transmembrane region" description="Helical; Name=6" evidence="1">
    <location>
        <begin position="269"/>
        <end position="289"/>
    </location>
</feature>
<feature type="topological domain" description="Extracellular" evidence="1">
    <location>
        <begin position="290"/>
        <end position="304"/>
    </location>
</feature>
<feature type="transmembrane region" description="Helical; Name=7" evidence="1">
    <location>
        <begin position="305"/>
        <end position="325"/>
    </location>
</feature>
<feature type="topological domain" description="Cytoplasmic" evidence="1">
    <location>
        <begin position="326"/>
        <end position="381"/>
    </location>
</feature>
<feature type="region of interest" description="Disordered" evidence="3">
    <location>
        <begin position="1"/>
        <end position="35"/>
    </location>
</feature>
<feature type="lipid moiety-binding region" description="S-palmitoyl cysteine" evidence="1">
    <location>
        <position position="342"/>
    </location>
</feature>
<feature type="glycosylation site" description="N-linked (GlcNAc...) asparagine" evidence="1">
    <location>
        <position position="11"/>
    </location>
</feature>
<feature type="disulfide bond" evidence="2">
    <location>
        <begin position="123"/>
        <end position="203"/>
    </location>
</feature>
<sequence>MGPIGTEADENQTVEEMKVEQYGPQTTPRGELVPDPEPELIDSTKLIEVQVVLILAYCSIILLGVIGNSLVIHVVIKFKSMRTVTNFFIANLAVADLVVNTLCLPFTLTYTLMGEWKMGPVLCHLVPYAQGLAVQVSTITLTVIALDRHRCIVYHLESKISKRISFLIIGLAWGISALLASPLAIFREYSLIEIIPDFEIVACTEKWPGEEKSIYGTVYSLSSLLILYVLPLGIISFSYTRIWSKLKSHVSPGAANDHYHQRRQKTTKMLVCVVVVFAVSWLPLHAFQLAVDIDSHVLDLKEYKLIFTVFHIIAMCSTFANPLLYGWMNSNYRKAFLSAFRCEQRLDAIHSEVSVTFKAKKNLEVRKNSGPNDSFTEATNV</sequence>
<dbReference type="EMBL" id="AF303090">
    <property type="protein sequence ID" value="AAG40772.1"/>
    <property type="molecule type" value="mRNA"/>
</dbReference>
<dbReference type="RefSeq" id="NP_001028004.1">
    <property type="nucleotide sequence ID" value="NM_001032832.1"/>
</dbReference>
<dbReference type="BMRB" id="Q9GK74"/>
<dbReference type="SMR" id="Q9GK74"/>
<dbReference type="FunCoup" id="Q9GK74">
    <property type="interactions" value="772"/>
</dbReference>
<dbReference type="STRING" id="9544.ENSMMUP00000018630"/>
<dbReference type="GlyCosmos" id="Q9GK74">
    <property type="glycosylation" value="1 site, No reported glycans"/>
</dbReference>
<dbReference type="PaxDb" id="9544-ENSMMUP00000018630"/>
<dbReference type="GeneID" id="574149"/>
<dbReference type="KEGG" id="mcc:574149"/>
<dbReference type="CTD" id="4887"/>
<dbReference type="eggNOG" id="KOG3656">
    <property type="taxonomic scope" value="Eukaryota"/>
</dbReference>
<dbReference type="InParanoid" id="Q9GK74"/>
<dbReference type="OrthoDB" id="9046662at2759"/>
<dbReference type="Proteomes" id="UP000006718">
    <property type="component" value="Unassembled WGS sequence"/>
</dbReference>
<dbReference type="GO" id="GO:0005886">
    <property type="term" value="C:plasma membrane"/>
    <property type="evidence" value="ECO:0007669"/>
    <property type="project" value="UniProtKB-SubCell"/>
</dbReference>
<dbReference type="GO" id="GO:0004983">
    <property type="term" value="F:neuropeptide Y receptor activity"/>
    <property type="evidence" value="ECO:0007669"/>
    <property type="project" value="InterPro"/>
</dbReference>
<dbReference type="CDD" id="cd15399">
    <property type="entry name" value="7tmA_NPY2R"/>
    <property type="match status" value="1"/>
</dbReference>
<dbReference type="FunFam" id="1.20.1070.10:FF:000158">
    <property type="entry name" value="Neuropeptide Y receptor type 2"/>
    <property type="match status" value="1"/>
</dbReference>
<dbReference type="Gene3D" id="1.20.1070.10">
    <property type="entry name" value="Rhodopsin 7-helix transmembrane proteins"/>
    <property type="match status" value="1"/>
</dbReference>
<dbReference type="InterPro" id="IPR000276">
    <property type="entry name" value="GPCR_Rhodpsn"/>
</dbReference>
<dbReference type="InterPro" id="IPR017452">
    <property type="entry name" value="GPCR_Rhodpsn_7TM"/>
</dbReference>
<dbReference type="InterPro" id="IPR001358">
    <property type="entry name" value="NPY2_rcpt"/>
</dbReference>
<dbReference type="InterPro" id="IPR000611">
    <property type="entry name" value="NPY_rcpt"/>
</dbReference>
<dbReference type="PANTHER" id="PTHR24235">
    <property type="entry name" value="NEUROPEPTIDE Y RECEPTOR"/>
    <property type="match status" value="1"/>
</dbReference>
<dbReference type="PANTHER" id="PTHR24235:SF20">
    <property type="entry name" value="NEUROPEPTIDE Y RECEPTOR TYPE 2"/>
    <property type="match status" value="1"/>
</dbReference>
<dbReference type="Pfam" id="PF00001">
    <property type="entry name" value="7tm_1"/>
    <property type="match status" value="1"/>
</dbReference>
<dbReference type="PRINTS" id="PR00237">
    <property type="entry name" value="GPCRRHODOPSN"/>
</dbReference>
<dbReference type="PRINTS" id="PR01014">
    <property type="entry name" value="NRPEPTIDEY2R"/>
</dbReference>
<dbReference type="PRINTS" id="PR01012">
    <property type="entry name" value="NRPEPTIDEYR"/>
</dbReference>
<dbReference type="SMART" id="SM01381">
    <property type="entry name" value="7TM_GPCR_Srsx"/>
    <property type="match status" value="1"/>
</dbReference>
<dbReference type="SUPFAM" id="SSF81321">
    <property type="entry name" value="Family A G protein-coupled receptor-like"/>
    <property type="match status" value="1"/>
</dbReference>
<dbReference type="PROSITE" id="PS00237">
    <property type="entry name" value="G_PROTEIN_RECEP_F1_1"/>
    <property type="match status" value="1"/>
</dbReference>
<dbReference type="PROSITE" id="PS50262">
    <property type="entry name" value="G_PROTEIN_RECEP_F1_2"/>
    <property type="match status" value="1"/>
</dbReference>
<accession>Q9GK74</accession>
<keyword id="KW-1003">Cell membrane</keyword>
<keyword id="KW-1015">Disulfide bond</keyword>
<keyword id="KW-0297">G-protein coupled receptor</keyword>
<keyword id="KW-0325">Glycoprotein</keyword>
<keyword id="KW-0449">Lipoprotein</keyword>
<keyword id="KW-0472">Membrane</keyword>
<keyword id="KW-0564">Palmitate</keyword>
<keyword id="KW-0675">Receptor</keyword>
<keyword id="KW-1185">Reference proteome</keyword>
<keyword id="KW-0807">Transducer</keyword>
<keyword id="KW-0812">Transmembrane</keyword>
<keyword id="KW-1133">Transmembrane helix</keyword>
<gene>
    <name type="primary">NPY2R</name>
</gene>
<protein>
    <recommendedName>
        <fullName>Neuropeptide Y receptor type 2</fullName>
        <shortName>NPY2-R</shortName>
    </recommendedName>
    <alternativeName>
        <fullName>NPY-Y2 receptor</fullName>
        <shortName>Y2 receptor</shortName>
    </alternativeName>
</protein>
<evidence type="ECO:0000255" key="1"/>
<evidence type="ECO:0000255" key="2">
    <source>
        <dbReference type="PROSITE-ProRule" id="PRU00521"/>
    </source>
</evidence>
<evidence type="ECO:0000256" key="3">
    <source>
        <dbReference type="SAM" id="MobiDB-lite"/>
    </source>
</evidence>
<organism>
    <name type="scientific">Macaca mulatta</name>
    <name type="common">Rhesus macaque</name>
    <dbReference type="NCBI Taxonomy" id="9544"/>
    <lineage>
        <taxon>Eukaryota</taxon>
        <taxon>Metazoa</taxon>
        <taxon>Chordata</taxon>
        <taxon>Craniata</taxon>
        <taxon>Vertebrata</taxon>
        <taxon>Euteleostomi</taxon>
        <taxon>Mammalia</taxon>
        <taxon>Eutheria</taxon>
        <taxon>Euarchontoglires</taxon>
        <taxon>Primates</taxon>
        <taxon>Haplorrhini</taxon>
        <taxon>Catarrhini</taxon>
        <taxon>Cercopithecidae</taxon>
        <taxon>Cercopithecinae</taxon>
        <taxon>Macaca</taxon>
    </lineage>
</organism>
<name>NPY2R_MACMU</name>
<reference key="1">
    <citation type="journal article" date="2001" name="Peptides">
        <title>Cloning and characterization of Rhesus monkey neuropeptide Y receptor subtypes.</title>
        <authorList>
            <person name="Gehlert D.R."/>
            <person name="Yang P."/>
            <person name="George C."/>
            <person name="Wang Y."/>
            <person name="Schober D."/>
            <person name="Gackenheimer S."/>
            <person name="Johnson D."/>
            <person name="Beavers L.S."/>
            <person name="Gadski R.A."/>
            <person name="Baez M."/>
        </authorList>
    </citation>
    <scope>NUCLEOTIDE SEQUENCE [MRNA]</scope>
</reference>
<comment type="function">
    <text>Receptor for neuropeptide Y and peptide YY.</text>
</comment>
<comment type="subcellular location">
    <subcellularLocation>
        <location>Cell membrane</location>
        <topology>Multi-pass membrane protein</topology>
    </subcellularLocation>
</comment>
<comment type="similarity">
    <text evidence="2">Belongs to the G-protein coupled receptor 1 family.</text>
</comment>